<gene>
    <name evidence="1" type="primary">guaA</name>
    <name type="ordered locus">Patl_3119</name>
</gene>
<proteinExistence type="inferred from homology"/>
<name>GUAA_PSEA6</name>
<comment type="function">
    <text evidence="1">Catalyzes the synthesis of GMP from XMP.</text>
</comment>
<comment type="catalytic activity">
    <reaction evidence="1">
        <text>XMP + L-glutamine + ATP + H2O = GMP + L-glutamate + AMP + diphosphate + 2 H(+)</text>
        <dbReference type="Rhea" id="RHEA:11680"/>
        <dbReference type="ChEBI" id="CHEBI:15377"/>
        <dbReference type="ChEBI" id="CHEBI:15378"/>
        <dbReference type="ChEBI" id="CHEBI:29985"/>
        <dbReference type="ChEBI" id="CHEBI:30616"/>
        <dbReference type="ChEBI" id="CHEBI:33019"/>
        <dbReference type="ChEBI" id="CHEBI:57464"/>
        <dbReference type="ChEBI" id="CHEBI:58115"/>
        <dbReference type="ChEBI" id="CHEBI:58359"/>
        <dbReference type="ChEBI" id="CHEBI:456215"/>
        <dbReference type="EC" id="6.3.5.2"/>
    </reaction>
</comment>
<comment type="pathway">
    <text evidence="1">Purine metabolism; GMP biosynthesis; GMP from XMP (L-Gln route): step 1/1.</text>
</comment>
<comment type="subunit">
    <text evidence="1">Homodimer.</text>
</comment>
<accession>Q15R63</accession>
<dbReference type="EC" id="6.3.5.2" evidence="1"/>
<dbReference type="EMBL" id="CP000388">
    <property type="protein sequence ID" value="ABG41625.1"/>
    <property type="molecule type" value="Genomic_DNA"/>
</dbReference>
<dbReference type="RefSeq" id="WP_011575863.1">
    <property type="nucleotide sequence ID" value="NC_008228.1"/>
</dbReference>
<dbReference type="SMR" id="Q15R63"/>
<dbReference type="STRING" id="342610.Patl_3119"/>
<dbReference type="KEGG" id="pat:Patl_3119"/>
<dbReference type="eggNOG" id="COG0518">
    <property type="taxonomic scope" value="Bacteria"/>
</dbReference>
<dbReference type="eggNOG" id="COG0519">
    <property type="taxonomic scope" value="Bacteria"/>
</dbReference>
<dbReference type="HOGENOM" id="CLU_014340_0_5_6"/>
<dbReference type="OrthoDB" id="9802219at2"/>
<dbReference type="UniPathway" id="UPA00189">
    <property type="reaction ID" value="UER00296"/>
</dbReference>
<dbReference type="Proteomes" id="UP000001981">
    <property type="component" value="Chromosome"/>
</dbReference>
<dbReference type="GO" id="GO:0005829">
    <property type="term" value="C:cytosol"/>
    <property type="evidence" value="ECO:0007669"/>
    <property type="project" value="TreeGrafter"/>
</dbReference>
<dbReference type="GO" id="GO:0005524">
    <property type="term" value="F:ATP binding"/>
    <property type="evidence" value="ECO:0007669"/>
    <property type="project" value="UniProtKB-UniRule"/>
</dbReference>
<dbReference type="GO" id="GO:0003921">
    <property type="term" value="F:GMP synthase activity"/>
    <property type="evidence" value="ECO:0007669"/>
    <property type="project" value="InterPro"/>
</dbReference>
<dbReference type="CDD" id="cd01742">
    <property type="entry name" value="GATase1_GMP_Synthase"/>
    <property type="match status" value="1"/>
</dbReference>
<dbReference type="CDD" id="cd01997">
    <property type="entry name" value="GMP_synthase_C"/>
    <property type="match status" value="1"/>
</dbReference>
<dbReference type="FunFam" id="3.30.300.10:FF:000002">
    <property type="entry name" value="GMP synthase [glutamine-hydrolyzing]"/>
    <property type="match status" value="1"/>
</dbReference>
<dbReference type="FunFam" id="3.40.50.620:FF:000001">
    <property type="entry name" value="GMP synthase [glutamine-hydrolyzing]"/>
    <property type="match status" value="1"/>
</dbReference>
<dbReference type="FunFam" id="3.40.50.880:FF:000001">
    <property type="entry name" value="GMP synthase [glutamine-hydrolyzing]"/>
    <property type="match status" value="1"/>
</dbReference>
<dbReference type="Gene3D" id="3.30.300.10">
    <property type="match status" value="1"/>
</dbReference>
<dbReference type="Gene3D" id="3.40.50.880">
    <property type="match status" value="1"/>
</dbReference>
<dbReference type="Gene3D" id="3.40.50.620">
    <property type="entry name" value="HUPs"/>
    <property type="match status" value="1"/>
</dbReference>
<dbReference type="HAMAP" id="MF_00344">
    <property type="entry name" value="GMP_synthase"/>
    <property type="match status" value="1"/>
</dbReference>
<dbReference type="InterPro" id="IPR029062">
    <property type="entry name" value="Class_I_gatase-like"/>
</dbReference>
<dbReference type="InterPro" id="IPR017926">
    <property type="entry name" value="GATASE"/>
</dbReference>
<dbReference type="InterPro" id="IPR001674">
    <property type="entry name" value="GMP_synth_C"/>
</dbReference>
<dbReference type="InterPro" id="IPR004739">
    <property type="entry name" value="GMP_synth_GATase"/>
</dbReference>
<dbReference type="InterPro" id="IPR022955">
    <property type="entry name" value="GMP_synthase"/>
</dbReference>
<dbReference type="InterPro" id="IPR025777">
    <property type="entry name" value="GMPS_ATP_PPase_dom"/>
</dbReference>
<dbReference type="InterPro" id="IPR022310">
    <property type="entry name" value="NAD/GMP_synthase"/>
</dbReference>
<dbReference type="InterPro" id="IPR014729">
    <property type="entry name" value="Rossmann-like_a/b/a_fold"/>
</dbReference>
<dbReference type="NCBIfam" id="TIGR00884">
    <property type="entry name" value="guaA_Cterm"/>
    <property type="match status" value="1"/>
</dbReference>
<dbReference type="NCBIfam" id="TIGR00888">
    <property type="entry name" value="guaA_Nterm"/>
    <property type="match status" value="1"/>
</dbReference>
<dbReference type="NCBIfam" id="NF000848">
    <property type="entry name" value="PRK00074.1"/>
    <property type="match status" value="1"/>
</dbReference>
<dbReference type="PANTHER" id="PTHR11922:SF2">
    <property type="entry name" value="GMP SYNTHASE [GLUTAMINE-HYDROLYZING]"/>
    <property type="match status" value="1"/>
</dbReference>
<dbReference type="PANTHER" id="PTHR11922">
    <property type="entry name" value="GMP SYNTHASE-RELATED"/>
    <property type="match status" value="1"/>
</dbReference>
<dbReference type="Pfam" id="PF00117">
    <property type="entry name" value="GATase"/>
    <property type="match status" value="1"/>
</dbReference>
<dbReference type="Pfam" id="PF00958">
    <property type="entry name" value="GMP_synt_C"/>
    <property type="match status" value="1"/>
</dbReference>
<dbReference type="Pfam" id="PF02540">
    <property type="entry name" value="NAD_synthase"/>
    <property type="match status" value="1"/>
</dbReference>
<dbReference type="PRINTS" id="PR00097">
    <property type="entry name" value="ANTSNTHASEII"/>
</dbReference>
<dbReference type="PRINTS" id="PR00099">
    <property type="entry name" value="CPSGATASE"/>
</dbReference>
<dbReference type="PRINTS" id="PR00096">
    <property type="entry name" value="GATASE"/>
</dbReference>
<dbReference type="SUPFAM" id="SSF52402">
    <property type="entry name" value="Adenine nucleotide alpha hydrolases-like"/>
    <property type="match status" value="1"/>
</dbReference>
<dbReference type="SUPFAM" id="SSF52317">
    <property type="entry name" value="Class I glutamine amidotransferase-like"/>
    <property type="match status" value="1"/>
</dbReference>
<dbReference type="SUPFAM" id="SSF54810">
    <property type="entry name" value="GMP synthetase C-terminal dimerisation domain"/>
    <property type="match status" value="1"/>
</dbReference>
<dbReference type="PROSITE" id="PS51273">
    <property type="entry name" value="GATASE_TYPE_1"/>
    <property type="match status" value="1"/>
</dbReference>
<dbReference type="PROSITE" id="PS51553">
    <property type="entry name" value="GMPS_ATP_PPASE"/>
    <property type="match status" value="1"/>
</dbReference>
<protein>
    <recommendedName>
        <fullName evidence="1">GMP synthase [glutamine-hydrolyzing]</fullName>
        <ecNumber evidence="1">6.3.5.2</ecNumber>
    </recommendedName>
    <alternativeName>
        <fullName evidence="1">GMP synthetase</fullName>
    </alternativeName>
    <alternativeName>
        <fullName evidence="1">Glutamine amidotransferase</fullName>
    </alternativeName>
</protein>
<feature type="chain" id="PRO_1000120365" description="GMP synthase [glutamine-hydrolyzing]">
    <location>
        <begin position="1"/>
        <end position="525"/>
    </location>
</feature>
<feature type="domain" description="Glutamine amidotransferase type-1" evidence="1">
    <location>
        <begin position="9"/>
        <end position="207"/>
    </location>
</feature>
<feature type="domain" description="GMPS ATP-PPase" evidence="1">
    <location>
        <begin position="208"/>
        <end position="400"/>
    </location>
</feature>
<feature type="active site" description="Nucleophile" evidence="1">
    <location>
        <position position="86"/>
    </location>
</feature>
<feature type="active site" evidence="1">
    <location>
        <position position="181"/>
    </location>
</feature>
<feature type="active site" evidence="1">
    <location>
        <position position="183"/>
    </location>
</feature>
<feature type="binding site" evidence="1">
    <location>
        <begin position="235"/>
        <end position="241"/>
    </location>
    <ligand>
        <name>ATP</name>
        <dbReference type="ChEBI" id="CHEBI:30616"/>
    </ligand>
</feature>
<sequence>MTTNIHDQRILILDFGSQYTQLIARRVREIGVYCELWAWDVTEEQIREFNPNGIILSGGPESVHAKDSPRAPQYVFDAGVPVFGICYGMQTMAEQLGGAVLGSDMREFGYAQVEVVEQMALLNNIEDHVSPNGNALLDVWMSHGDKVAAVPDGFITAAKTDSCPFAAIVHPEKQFYGVQFHPEVTHTRQGQRMLSHFVLDICQCEKLWTPDAIIEDAVARMKKQIGDDEVILGLSGGVDSSVVAMLLHRAIGKNLTCVFVDNGLLRLNEGQQVMDMFGDHFGLNIIKIDAEERFLSALAGTDEPEAKRKIIGRVFVEVFDEESKKLKNAKWLAQGTIYPDVIESAGSATGKAHVIKSHHNVGGLPDDMAMGLVEPLRELFKDEVRKIGLELGLPYDMLYRHPFPGPGLGVRVLGEVKKEYCDLLRRADAIFIDELHKHDLYNKVSQAFTVFLPVKSVGVMGDARKYDWVVSLRAVETIDFMTAHWAHLPYEFLGKVSNRIINEIDGISRVVYDISGKPPATIEWE</sequence>
<reference key="1">
    <citation type="submission" date="2006-06" db="EMBL/GenBank/DDBJ databases">
        <title>Complete sequence of Pseudoalteromonas atlantica T6c.</title>
        <authorList>
            <consortium name="US DOE Joint Genome Institute"/>
            <person name="Copeland A."/>
            <person name="Lucas S."/>
            <person name="Lapidus A."/>
            <person name="Barry K."/>
            <person name="Detter J.C."/>
            <person name="Glavina del Rio T."/>
            <person name="Hammon N."/>
            <person name="Israni S."/>
            <person name="Dalin E."/>
            <person name="Tice H."/>
            <person name="Pitluck S."/>
            <person name="Saunders E."/>
            <person name="Brettin T."/>
            <person name="Bruce D."/>
            <person name="Han C."/>
            <person name="Tapia R."/>
            <person name="Gilna P."/>
            <person name="Schmutz J."/>
            <person name="Larimer F."/>
            <person name="Land M."/>
            <person name="Hauser L."/>
            <person name="Kyrpides N."/>
            <person name="Kim E."/>
            <person name="Karls A.C."/>
            <person name="Bartlett D."/>
            <person name="Higgins B.P."/>
            <person name="Richardson P."/>
        </authorList>
    </citation>
    <scope>NUCLEOTIDE SEQUENCE [LARGE SCALE GENOMIC DNA]</scope>
    <source>
        <strain>T6c / ATCC BAA-1087</strain>
    </source>
</reference>
<evidence type="ECO:0000255" key="1">
    <source>
        <dbReference type="HAMAP-Rule" id="MF_00344"/>
    </source>
</evidence>
<organism>
    <name type="scientific">Pseudoalteromonas atlantica (strain T6c / ATCC BAA-1087)</name>
    <dbReference type="NCBI Taxonomy" id="3042615"/>
    <lineage>
        <taxon>Bacteria</taxon>
        <taxon>Pseudomonadati</taxon>
        <taxon>Pseudomonadota</taxon>
        <taxon>Gammaproteobacteria</taxon>
        <taxon>Alteromonadales</taxon>
        <taxon>Alteromonadaceae</taxon>
        <taxon>Paraglaciecola</taxon>
    </lineage>
</organism>
<keyword id="KW-0067">ATP-binding</keyword>
<keyword id="KW-0315">Glutamine amidotransferase</keyword>
<keyword id="KW-0332">GMP biosynthesis</keyword>
<keyword id="KW-0436">Ligase</keyword>
<keyword id="KW-0547">Nucleotide-binding</keyword>
<keyword id="KW-0658">Purine biosynthesis</keyword>